<accession>O46504</accession>
<dbReference type="EMBL" id="AF026954">
    <property type="protein sequence ID" value="AAC48785.1"/>
    <property type="molecule type" value="mRNA"/>
</dbReference>
<dbReference type="RefSeq" id="NP_777206.1">
    <property type="nucleotide sequence ID" value="NM_174781.2"/>
</dbReference>
<dbReference type="SMR" id="O46504"/>
<dbReference type="FunCoup" id="O46504">
    <property type="interactions" value="1328"/>
</dbReference>
<dbReference type="STRING" id="9913.ENSBTAP00000021895"/>
<dbReference type="PaxDb" id="9913-ENSBTAP00000021895"/>
<dbReference type="GeneID" id="286844"/>
<dbReference type="KEGG" id="bta:286844"/>
<dbReference type="CTD" id="55066"/>
<dbReference type="eggNOG" id="KOG2844">
    <property type="taxonomic scope" value="Eukaryota"/>
</dbReference>
<dbReference type="InParanoid" id="O46504"/>
<dbReference type="OrthoDB" id="429143at2759"/>
<dbReference type="Proteomes" id="UP000009136">
    <property type="component" value="Unplaced"/>
</dbReference>
<dbReference type="GO" id="GO:0005737">
    <property type="term" value="C:cytoplasm"/>
    <property type="evidence" value="ECO:0000318"/>
    <property type="project" value="GO_Central"/>
</dbReference>
<dbReference type="GO" id="GO:0005759">
    <property type="term" value="C:mitochondrial matrix"/>
    <property type="evidence" value="ECO:0000318"/>
    <property type="project" value="GO_Central"/>
</dbReference>
<dbReference type="GO" id="GO:0019910">
    <property type="term" value="C:mitochondrial pyruvate dehydrogenase (lipoamide) phosphatase complex"/>
    <property type="evidence" value="ECO:0000314"/>
    <property type="project" value="FlyBase"/>
</dbReference>
<dbReference type="GO" id="GO:0005739">
    <property type="term" value="C:mitochondrion"/>
    <property type="evidence" value="ECO:0000318"/>
    <property type="project" value="GO_Central"/>
</dbReference>
<dbReference type="GO" id="GO:0045254">
    <property type="term" value="C:pyruvate dehydrogenase complex"/>
    <property type="evidence" value="ECO:0000314"/>
    <property type="project" value="FlyBase"/>
</dbReference>
<dbReference type="GO" id="GO:0008597">
    <property type="term" value="F:calcium-dependent protein serine/threonine phosphatase regulator activity"/>
    <property type="evidence" value="ECO:0000314"/>
    <property type="project" value="FlyBase"/>
</dbReference>
<dbReference type="FunFam" id="3.30.1360.120:FF:000046">
    <property type="entry name" value="Pyruvate dehydrogenase phosphatase regulatory mitochondrial"/>
    <property type="match status" value="1"/>
</dbReference>
<dbReference type="FunFam" id="3.30.70.1400:FF:000003">
    <property type="entry name" value="Pyruvate dehydrogenase phosphatase regulatory subunit"/>
    <property type="match status" value="1"/>
</dbReference>
<dbReference type="FunFam" id="2.40.30.110:FF:000004">
    <property type="entry name" value="Pyruvate dehydrogenase phosphatase regulatory subunit, mitochondrial"/>
    <property type="match status" value="1"/>
</dbReference>
<dbReference type="Gene3D" id="2.40.30.110">
    <property type="entry name" value="Aminomethyltransferase beta-barrel domains"/>
    <property type="match status" value="1"/>
</dbReference>
<dbReference type="Gene3D" id="3.30.70.1400">
    <property type="entry name" value="Aminomethyltransferase beta-barrel domains"/>
    <property type="match status" value="1"/>
</dbReference>
<dbReference type="Gene3D" id="3.30.9.10">
    <property type="entry name" value="D-Amino Acid Oxidase, subunit A, domain 2"/>
    <property type="match status" value="1"/>
</dbReference>
<dbReference type="Gene3D" id="3.50.50.60">
    <property type="entry name" value="FAD/NAD(P)-binding domain"/>
    <property type="match status" value="1"/>
</dbReference>
<dbReference type="Gene3D" id="3.30.1360.120">
    <property type="entry name" value="Probable tRNA modification gtpase trme, domain 1"/>
    <property type="match status" value="1"/>
</dbReference>
<dbReference type="InterPro" id="IPR006076">
    <property type="entry name" value="FAD-dep_OxRdtase"/>
</dbReference>
<dbReference type="InterPro" id="IPR036188">
    <property type="entry name" value="FAD/NAD-bd_sf"/>
</dbReference>
<dbReference type="InterPro" id="IPR032503">
    <property type="entry name" value="FAO_M"/>
</dbReference>
<dbReference type="InterPro" id="IPR013977">
    <property type="entry name" value="GCST_C"/>
</dbReference>
<dbReference type="InterPro" id="IPR006222">
    <property type="entry name" value="GCV_T_N"/>
</dbReference>
<dbReference type="InterPro" id="IPR029043">
    <property type="entry name" value="GcvT/YgfZ_C"/>
</dbReference>
<dbReference type="InterPro" id="IPR001763">
    <property type="entry name" value="Rhodanese-like_dom"/>
</dbReference>
<dbReference type="InterPro" id="IPR027266">
    <property type="entry name" value="TrmE/GcvT_dom1"/>
</dbReference>
<dbReference type="PANTHER" id="PTHR13847:SF193">
    <property type="entry name" value="PYRUVATE DEHYDROGENASE PHOSPHATASE REGULATORY SUBUNIT, MITOCHONDRIAL"/>
    <property type="match status" value="1"/>
</dbReference>
<dbReference type="PANTHER" id="PTHR13847">
    <property type="entry name" value="SARCOSINE DEHYDROGENASE-RELATED"/>
    <property type="match status" value="1"/>
</dbReference>
<dbReference type="Pfam" id="PF01266">
    <property type="entry name" value="DAO"/>
    <property type="match status" value="1"/>
</dbReference>
<dbReference type="Pfam" id="PF16350">
    <property type="entry name" value="FAO_M"/>
    <property type="match status" value="1"/>
</dbReference>
<dbReference type="Pfam" id="PF01571">
    <property type="entry name" value="GCV_T"/>
    <property type="match status" value="1"/>
</dbReference>
<dbReference type="Pfam" id="PF08669">
    <property type="entry name" value="GCV_T_C"/>
    <property type="match status" value="1"/>
</dbReference>
<dbReference type="SUPFAM" id="SSF101790">
    <property type="entry name" value="Aminomethyltransferase beta-barrel domain"/>
    <property type="match status" value="1"/>
</dbReference>
<dbReference type="SUPFAM" id="SSF54373">
    <property type="entry name" value="FAD-linked reductases, C-terminal domain"/>
    <property type="match status" value="1"/>
</dbReference>
<dbReference type="SUPFAM" id="SSF51905">
    <property type="entry name" value="FAD/NAD(P)-binding domain"/>
    <property type="match status" value="1"/>
</dbReference>
<dbReference type="SUPFAM" id="SSF103025">
    <property type="entry name" value="Folate-binding domain"/>
    <property type="match status" value="1"/>
</dbReference>
<comment type="function">
    <text evidence="2">Decreases the sensitivity of PDP1 to magnesium ions, and this inhibition is reversed by the polyamine spermine.</text>
</comment>
<comment type="subunit">
    <text evidence="3">Heterodimer of a catalytic (PDP1) and a regulatory (PDPR) subunit.</text>
</comment>
<comment type="subcellular location">
    <subcellularLocation>
        <location evidence="4">Mitochondrion matrix</location>
    </subcellularLocation>
</comment>
<comment type="similarity">
    <text evidence="4">Belongs to the GcvT family.</text>
</comment>
<keyword id="KW-0903">Direct protein sequencing</keyword>
<keyword id="KW-0496">Mitochondrion</keyword>
<keyword id="KW-1185">Reference proteome</keyword>
<keyword id="KW-0809">Transit peptide</keyword>
<sequence>MLPRLLAVVRGPGSCRGWREGSPARGSASATVAPPVALPAQAQVVVCGGGIMGTSVAYHLSKMGWKDVVLLEQGRLAAGSTRFCAGILSTARHLAIEQKMADYSNKLYHQLEQETGIQTGYTRTGSIFLAQTQDRLISLKRINSRLNVIGIPCEIISPKKVAELHPLLNVHDLVGAMHVPEDAVVSSADVALALASAASQSGVQIYDRTSILHVMVKKGQVAGVETDKGQIQCQYFVNCAGQWAYELGLCSEEPVSIPLHACEHFYLLTRPWETPLPSSTPTVVDADGRIYIRNWQGGILSGGFEKNPKPIFTEGKNQLEIQNLQEDWDHFEPLLSSLLRRMPQLETLEIVKLVNCPETFTPDMRCIMGESPSVRGYFVLVGMNSAGLSFGGGAGKYLAEWMVYGYPSENVWELDLKRFGALQSSRTFLRHRVMEVMPLLYDLKVPRWDFQTGRQLRTSPLYDRLDAQGARWMEKHGFERPKYFIPPDKDLLALEQSKTFYKPDWFEIVESEVKCCKEAVCVIDMSSFTKFEITSTGDQALEILQYLFSNDLDVPVGHIVHTGMLNERGGYENDCSIARLSKRSFFMISPTDQQVHCWAWLKKYMPEDSNLILEDVTWKYTALNLIGPRTVDVLSELSYAPMTPDHFPSLFCKEMSVGYANGIRVMSMTHTGEPGFMLYIPIEYALHVYNEVMSVGQKYGIRNAGYYALRSLRIEKFFAFWGQDLNTLTTPLECGGESRVKLDKGVDFIGRDALLQQRQNGVYNRLTMFILDDHDTDLDLWPWWGEPIYRNGRYVGKTTSSAYGYTLERHVCLGFVHNFSEDTGEEQVVTADFINRGEYEIDIAGHRFQAKAKLYPVPSLLTHKRRKEDVELSDLHGK</sequence>
<evidence type="ECO:0000255" key="1"/>
<evidence type="ECO:0000269" key="2">
    <source>
    </source>
</evidence>
<evidence type="ECO:0000269" key="3">
    <source>
    </source>
</evidence>
<evidence type="ECO:0000305" key="4"/>
<protein>
    <recommendedName>
        <fullName>Pyruvate dehydrogenase phosphatase regulatory subunit, mitochondrial</fullName>
        <shortName>PDPr</shortName>
    </recommendedName>
</protein>
<reference key="1">
    <citation type="journal article" date="1997" name="J. Biol. Chem.">
        <title>Cloning, expression, and properties of the regulatory subunit of bovine pyruvate dehydrogenase phosphatase.</title>
        <authorList>
            <person name="Lawson J.E."/>
            <person name="Park S.H."/>
            <person name="Mattison A.R."/>
            <person name="Yan J."/>
            <person name="Reed L.J."/>
        </authorList>
    </citation>
    <scope>NUCLEOTIDE SEQUENCE [MRNA]</scope>
    <scope>PROTEIN SEQUENCE OF 32-45; 216-229; 350-362; 370-377; 385-399; 419-442; 445-474; 490-497 AND 656-665</scope>
    <scope>SUBUNIT</scope>
</reference>
<reference key="2">
    <citation type="journal article" date="1996" name="Proc. Natl. Acad. Sci. U.S.A.">
        <title>Role of the regulatory subunit of bovine pyruvate dehydrogenase phosphatase.</title>
        <authorList>
            <person name="Yan J."/>
            <person name="Lawson J.E."/>
            <person name="Reed L.J."/>
        </authorList>
    </citation>
    <scope>FUNCTION</scope>
</reference>
<proteinExistence type="evidence at protein level"/>
<gene>
    <name type="primary">PDPR</name>
</gene>
<organism>
    <name type="scientific">Bos taurus</name>
    <name type="common">Bovine</name>
    <dbReference type="NCBI Taxonomy" id="9913"/>
    <lineage>
        <taxon>Eukaryota</taxon>
        <taxon>Metazoa</taxon>
        <taxon>Chordata</taxon>
        <taxon>Craniata</taxon>
        <taxon>Vertebrata</taxon>
        <taxon>Euteleostomi</taxon>
        <taxon>Mammalia</taxon>
        <taxon>Eutheria</taxon>
        <taxon>Laurasiatheria</taxon>
        <taxon>Artiodactyla</taxon>
        <taxon>Ruminantia</taxon>
        <taxon>Pecora</taxon>
        <taxon>Bovidae</taxon>
        <taxon>Bovinae</taxon>
        <taxon>Bos</taxon>
    </lineage>
</organism>
<feature type="transit peptide" description="Mitochondrion" evidence="1">
    <location>
        <begin position="1"/>
        <end position="26"/>
    </location>
</feature>
<feature type="chain" id="PRO_0000328739" description="Pyruvate dehydrogenase phosphatase regulatory subunit, mitochondrial">
    <location>
        <begin position="27"/>
        <end position="878"/>
    </location>
</feature>
<name>PDPR_BOVIN</name>